<feature type="chain" id="PRO_0000188105" description="ATP synthase epsilon chain">
    <location>
        <begin position="1"/>
        <end position="140"/>
    </location>
</feature>
<dbReference type="EMBL" id="BX640451">
    <property type="protein sequence ID" value="CAE34966.1"/>
    <property type="molecule type" value="Genomic_DNA"/>
</dbReference>
<dbReference type="RefSeq" id="WP_003815341.1">
    <property type="nucleotide sequence ID" value="NC_002927.3"/>
</dbReference>
<dbReference type="SMR" id="Q7WEN0"/>
<dbReference type="KEGG" id="bbr:BB4604"/>
<dbReference type="eggNOG" id="COG0355">
    <property type="taxonomic scope" value="Bacteria"/>
</dbReference>
<dbReference type="HOGENOM" id="CLU_084338_2_0_4"/>
<dbReference type="Proteomes" id="UP000001027">
    <property type="component" value="Chromosome"/>
</dbReference>
<dbReference type="GO" id="GO:0005886">
    <property type="term" value="C:plasma membrane"/>
    <property type="evidence" value="ECO:0007669"/>
    <property type="project" value="UniProtKB-SubCell"/>
</dbReference>
<dbReference type="GO" id="GO:0045259">
    <property type="term" value="C:proton-transporting ATP synthase complex"/>
    <property type="evidence" value="ECO:0007669"/>
    <property type="project" value="UniProtKB-KW"/>
</dbReference>
<dbReference type="GO" id="GO:0005524">
    <property type="term" value="F:ATP binding"/>
    <property type="evidence" value="ECO:0007669"/>
    <property type="project" value="UniProtKB-UniRule"/>
</dbReference>
<dbReference type="GO" id="GO:0046933">
    <property type="term" value="F:proton-transporting ATP synthase activity, rotational mechanism"/>
    <property type="evidence" value="ECO:0007669"/>
    <property type="project" value="UniProtKB-UniRule"/>
</dbReference>
<dbReference type="CDD" id="cd12152">
    <property type="entry name" value="F1-ATPase_delta"/>
    <property type="match status" value="1"/>
</dbReference>
<dbReference type="FunFam" id="2.60.15.10:FF:000001">
    <property type="entry name" value="ATP synthase epsilon chain"/>
    <property type="match status" value="1"/>
</dbReference>
<dbReference type="Gene3D" id="2.60.15.10">
    <property type="entry name" value="F0F1 ATP synthase delta/epsilon subunit, N-terminal"/>
    <property type="match status" value="1"/>
</dbReference>
<dbReference type="HAMAP" id="MF_00530">
    <property type="entry name" value="ATP_synth_epsil_bac"/>
    <property type="match status" value="1"/>
</dbReference>
<dbReference type="InterPro" id="IPR036794">
    <property type="entry name" value="ATP_F1_dsu/esu_C_sf"/>
</dbReference>
<dbReference type="InterPro" id="IPR001469">
    <property type="entry name" value="ATP_synth_F1_dsu/esu"/>
</dbReference>
<dbReference type="InterPro" id="IPR020546">
    <property type="entry name" value="ATP_synth_F1_dsu/esu_N"/>
</dbReference>
<dbReference type="InterPro" id="IPR036771">
    <property type="entry name" value="ATPsynth_dsu/esu_N"/>
</dbReference>
<dbReference type="NCBIfam" id="TIGR01216">
    <property type="entry name" value="ATP_synt_epsi"/>
    <property type="match status" value="1"/>
</dbReference>
<dbReference type="NCBIfam" id="NF001847">
    <property type="entry name" value="PRK00571.1-4"/>
    <property type="match status" value="1"/>
</dbReference>
<dbReference type="PANTHER" id="PTHR13822">
    <property type="entry name" value="ATP SYNTHASE DELTA/EPSILON CHAIN"/>
    <property type="match status" value="1"/>
</dbReference>
<dbReference type="PANTHER" id="PTHR13822:SF10">
    <property type="entry name" value="ATP SYNTHASE EPSILON CHAIN, CHLOROPLASTIC"/>
    <property type="match status" value="1"/>
</dbReference>
<dbReference type="Pfam" id="PF02823">
    <property type="entry name" value="ATP-synt_DE_N"/>
    <property type="match status" value="1"/>
</dbReference>
<dbReference type="SUPFAM" id="SSF46604">
    <property type="entry name" value="Epsilon subunit of F1F0-ATP synthase C-terminal domain"/>
    <property type="match status" value="1"/>
</dbReference>
<dbReference type="SUPFAM" id="SSF51344">
    <property type="entry name" value="Epsilon subunit of F1F0-ATP synthase N-terminal domain"/>
    <property type="match status" value="1"/>
</dbReference>
<proteinExistence type="inferred from homology"/>
<accession>Q7WEN0</accession>
<comment type="function">
    <text evidence="1">Produces ATP from ADP in the presence of a proton gradient across the membrane.</text>
</comment>
<comment type="subunit">
    <text>F-type ATPases have 2 components, CF(1) - the catalytic core - and CF(0) - the membrane proton channel. CF(1) has five subunits: alpha(3), beta(3), gamma(1), delta(1), epsilon(1). CF(0) has three main subunits: a, b and c.</text>
</comment>
<comment type="subcellular location">
    <subcellularLocation>
        <location evidence="1">Cell inner membrane</location>
        <topology evidence="1">Peripheral membrane protein</topology>
    </subcellularLocation>
</comment>
<comment type="similarity">
    <text evidence="1">Belongs to the ATPase epsilon chain family.</text>
</comment>
<keyword id="KW-0066">ATP synthesis</keyword>
<keyword id="KW-0997">Cell inner membrane</keyword>
<keyword id="KW-1003">Cell membrane</keyword>
<keyword id="KW-0139">CF(1)</keyword>
<keyword id="KW-0375">Hydrogen ion transport</keyword>
<keyword id="KW-0406">Ion transport</keyword>
<keyword id="KW-0472">Membrane</keyword>
<keyword id="KW-0813">Transport</keyword>
<evidence type="ECO:0000255" key="1">
    <source>
        <dbReference type="HAMAP-Rule" id="MF_00530"/>
    </source>
</evidence>
<reference key="1">
    <citation type="journal article" date="2003" name="Nat. Genet.">
        <title>Comparative analysis of the genome sequences of Bordetella pertussis, Bordetella parapertussis and Bordetella bronchiseptica.</title>
        <authorList>
            <person name="Parkhill J."/>
            <person name="Sebaihia M."/>
            <person name="Preston A."/>
            <person name="Murphy L.D."/>
            <person name="Thomson N.R."/>
            <person name="Harris D.E."/>
            <person name="Holden M.T.G."/>
            <person name="Churcher C.M."/>
            <person name="Bentley S.D."/>
            <person name="Mungall K.L."/>
            <person name="Cerdeno-Tarraga A.-M."/>
            <person name="Temple L."/>
            <person name="James K.D."/>
            <person name="Harris B."/>
            <person name="Quail M.A."/>
            <person name="Achtman M."/>
            <person name="Atkin R."/>
            <person name="Baker S."/>
            <person name="Basham D."/>
            <person name="Bason N."/>
            <person name="Cherevach I."/>
            <person name="Chillingworth T."/>
            <person name="Collins M."/>
            <person name="Cronin A."/>
            <person name="Davis P."/>
            <person name="Doggett J."/>
            <person name="Feltwell T."/>
            <person name="Goble A."/>
            <person name="Hamlin N."/>
            <person name="Hauser H."/>
            <person name="Holroyd S."/>
            <person name="Jagels K."/>
            <person name="Leather S."/>
            <person name="Moule S."/>
            <person name="Norberczak H."/>
            <person name="O'Neil S."/>
            <person name="Ormond D."/>
            <person name="Price C."/>
            <person name="Rabbinowitsch E."/>
            <person name="Rutter S."/>
            <person name="Sanders M."/>
            <person name="Saunders D."/>
            <person name="Seeger K."/>
            <person name="Sharp S."/>
            <person name="Simmonds M."/>
            <person name="Skelton J."/>
            <person name="Squares R."/>
            <person name="Squares S."/>
            <person name="Stevens K."/>
            <person name="Unwin L."/>
            <person name="Whitehead S."/>
            <person name="Barrell B.G."/>
            <person name="Maskell D.J."/>
        </authorList>
    </citation>
    <scope>NUCLEOTIDE SEQUENCE [LARGE SCALE GENOMIC DNA]</scope>
    <source>
        <strain>ATCC BAA-588 / NCTC 13252 / RB50</strain>
    </source>
</reference>
<organism>
    <name type="scientific">Bordetella bronchiseptica (strain ATCC BAA-588 / NCTC 13252 / RB50)</name>
    <name type="common">Alcaligenes bronchisepticus</name>
    <dbReference type="NCBI Taxonomy" id="257310"/>
    <lineage>
        <taxon>Bacteria</taxon>
        <taxon>Pseudomonadati</taxon>
        <taxon>Pseudomonadota</taxon>
        <taxon>Betaproteobacteria</taxon>
        <taxon>Burkholderiales</taxon>
        <taxon>Alcaligenaceae</taxon>
        <taxon>Bordetella</taxon>
    </lineage>
</organism>
<gene>
    <name evidence="1" type="primary">atpC</name>
    <name type="ordered locus">BB4604</name>
</gene>
<name>ATPE_BORBR</name>
<protein>
    <recommendedName>
        <fullName evidence="1">ATP synthase epsilon chain</fullName>
    </recommendedName>
    <alternativeName>
        <fullName evidence="1">ATP synthase F1 sector epsilon subunit</fullName>
    </alternativeName>
    <alternativeName>
        <fullName evidence="1">F-ATPase epsilon subunit</fullName>
    </alternativeName>
</protein>
<sequence length="140" mass="14684">MATLHVDVVSAEEAIFTGEAKFVVLPGEAGELGILPGHTPLISRIRPGTVKIVRADEGEENIFVAGGILEVQPGSVTVLADTAIRAADLDEARAVAAREKAEEALRNAKDKADIAVVEAELAMLAAQAVAARKLRQGRTH</sequence>